<organism>
    <name type="scientific">Chromohalobacter salexigens (strain ATCC BAA-138 / DSM 3043 / CIP 106854 / NCIMB 13768 / 1H11)</name>
    <dbReference type="NCBI Taxonomy" id="290398"/>
    <lineage>
        <taxon>Bacteria</taxon>
        <taxon>Pseudomonadati</taxon>
        <taxon>Pseudomonadota</taxon>
        <taxon>Gammaproteobacteria</taxon>
        <taxon>Oceanospirillales</taxon>
        <taxon>Halomonadaceae</taxon>
        <taxon>Chromohalobacter</taxon>
    </lineage>
</organism>
<feature type="chain" id="PRO_1000014498" description="Transaldolase">
    <location>
        <begin position="1"/>
        <end position="316"/>
    </location>
</feature>
<feature type="active site" description="Schiff-base intermediate with substrate" evidence="2">
    <location>
        <position position="131"/>
    </location>
</feature>
<protein>
    <recommendedName>
        <fullName evidence="2">Transaldolase</fullName>
        <ecNumber evidence="2">2.2.1.2</ecNumber>
    </recommendedName>
</protein>
<evidence type="ECO:0000250" key="1"/>
<evidence type="ECO:0000255" key="2">
    <source>
        <dbReference type="HAMAP-Rule" id="MF_00492"/>
    </source>
</evidence>
<comment type="function">
    <text evidence="2">Transaldolase is important for the balance of metabolites in the pentose-phosphate pathway.</text>
</comment>
<comment type="catalytic activity">
    <reaction evidence="2">
        <text>D-sedoheptulose 7-phosphate + D-glyceraldehyde 3-phosphate = D-erythrose 4-phosphate + beta-D-fructose 6-phosphate</text>
        <dbReference type="Rhea" id="RHEA:17053"/>
        <dbReference type="ChEBI" id="CHEBI:16897"/>
        <dbReference type="ChEBI" id="CHEBI:57483"/>
        <dbReference type="ChEBI" id="CHEBI:57634"/>
        <dbReference type="ChEBI" id="CHEBI:59776"/>
        <dbReference type="EC" id="2.2.1.2"/>
    </reaction>
</comment>
<comment type="pathway">
    <text evidence="2">Carbohydrate degradation; pentose phosphate pathway; D-glyceraldehyde 3-phosphate and beta-D-fructose 6-phosphate from D-ribose 5-phosphate and D-xylulose 5-phosphate (non-oxidative stage): step 2/3.</text>
</comment>
<comment type="subunit">
    <text evidence="1">Homodimer.</text>
</comment>
<comment type="subcellular location">
    <subcellularLocation>
        <location evidence="2">Cytoplasm</location>
    </subcellularLocation>
</comment>
<comment type="similarity">
    <text evidence="2">Belongs to the transaldolase family. Type 1 subfamily.</text>
</comment>
<proteinExistence type="inferred from homology"/>
<dbReference type="EC" id="2.2.1.2" evidence="2"/>
<dbReference type="EMBL" id="CP000285">
    <property type="protein sequence ID" value="ABE58007.1"/>
    <property type="molecule type" value="Genomic_DNA"/>
</dbReference>
<dbReference type="RefSeq" id="WP_011505953.1">
    <property type="nucleotide sequence ID" value="NC_007963.1"/>
</dbReference>
<dbReference type="SMR" id="Q1QZV1"/>
<dbReference type="STRING" id="290398.Csal_0645"/>
<dbReference type="GeneID" id="95333404"/>
<dbReference type="KEGG" id="csa:Csal_0645"/>
<dbReference type="eggNOG" id="COG0176">
    <property type="taxonomic scope" value="Bacteria"/>
</dbReference>
<dbReference type="HOGENOM" id="CLU_047470_0_1_6"/>
<dbReference type="OrthoDB" id="9809101at2"/>
<dbReference type="UniPathway" id="UPA00115">
    <property type="reaction ID" value="UER00414"/>
</dbReference>
<dbReference type="Proteomes" id="UP000000239">
    <property type="component" value="Chromosome"/>
</dbReference>
<dbReference type="GO" id="GO:0005829">
    <property type="term" value="C:cytosol"/>
    <property type="evidence" value="ECO:0007669"/>
    <property type="project" value="TreeGrafter"/>
</dbReference>
<dbReference type="GO" id="GO:0004801">
    <property type="term" value="F:transaldolase activity"/>
    <property type="evidence" value="ECO:0000250"/>
    <property type="project" value="UniProtKB"/>
</dbReference>
<dbReference type="GO" id="GO:0005975">
    <property type="term" value="P:carbohydrate metabolic process"/>
    <property type="evidence" value="ECO:0007669"/>
    <property type="project" value="InterPro"/>
</dbReference>
<dbReference type="GO" id="GO:0006098">
    <property type="term" value="P:pentose-phosphate shunt"/>
    <property type="evidence" value="ECO:0007669"/>
    <property type="project" value="UniProtKB-UniRule"/>
</dbReference>
<dbReference type="CDD" id="cd00957">
    <property type="entry name" value="Transaldolase_TalAB"/>
    <property type="match status" value="1"/>
</dbReference>
<dbReference type="FunFam" id="3.20.20.70:FF:000131">
    <property type="entry name" value="Transaldolase"/>
    <property type="match status" value="1"/>
</dbReference>
<dbReference type="Gene3D" id="3.20.20.70">
    <property type="entry name" value="Aldolase class I"/>
    <property type="match status" value="1"/>
</dbReference>
<dbReference type="HAMAP" id="MF_00492">
    <property type="entry name" value="Transaldolase_1"/>
    <property type="match status" value="1"/>
</dbReference>
<dbReference type="InterPro" id="IPR013785">
    <property type="entry name" value="Aldolase_TIM"/>
</dbReference>
<dbReference type="InterPro" id="IPR001585">
    <property type="entry name" value="TAL/FSA"/>
</dbReference>
<dbReference type="InterPro" id="IPR004730">
    <property type="entry name" value="Transaldolase_1"/>
</dbReference>
<dbReference type="InterPro" id="IPR018225">
    <property type="entry name" value="Transaldolase_AS"/>
</dbReference>
<dbReference type="NCBIfam" id="NF009001">
    <property type="entry name" value="PRK12346.1"/>
    <property type="match status" value="1"/>
</dbReference>
<dbReference type="NCBIfam" id="TIGR00874">
    <property type="entry name" value="talAB"/>
    <property type="match status" value="1"/>
</dbReference>
<dbReference type="PANTHER" id="PTHR10683">
    <property type="entry name" value="TRANSALDOLASE"/>
    <property type="match status" value="1"/>
</dbReference>
<dbReference type="PANTHER" id="PTHR10683:SF18">
    <property type="entry name" value="TRANSALDOLASE"/>
    <property type="match status" value="1"/>
</dbReference>
<dbReference type="Pfam" id="PF00923">
    <property type="entry name" value="TAL_FSA"/>
    <property type="match status" value="1"/>
</dbReference>
<dbReference type="SUPFAM" id="SSF51569">
    <property type="entry name" value="Aldolase"/>
    <property type="match status" value="1"/>
</dbReference>
<dbReference type="PROSITE" id="PS01054">
    <property type="entry name" value="TRANSALDOLASE_1"/>
    <property type="match status" value="1"/>
</dbReference>
<dbReference type="PROSITE" id="PS00958">
    <property type="entry name" value="TRANSALDOLASE_2"/>
    <property type="match status" value="1"/>
</dbReference>
<keyword id="KW-0963">Cytoplasm</keyword>
<keyword id="KW-0570">Pentose shunt</keyword>
<keyword id="KW-1185">Reference proteome</keyword>
<keyword id="KW-0704">Schiff base</keyword>
<keyword id="KW-0808">Transferase</keyword>
<reference key="1">
    <citation type="journal article" date="2011" name="Stand. Genomic Sci.">
        <title>Complete genome sequence of the halophilic and highly halotolerant Chromohalobacter salexigens type strain (1H11(T)).</title>
        <authorList>
            <person name="Copeland A."/>
            <person name="O'Connor K."/>
            <person name="Lucas S."/>
            <person name="Lapidus A."/>
            <person name="Berry K.W."/>
            <person name="Detter J.C."/>
            <person name="Del Rio T.G."/>
            <person name="Hammon N."/>
            <person name="Dalin E."/>
            <person name="Tice H."/>
            <person name="Pitluck S."/>
            <person name="Bruce D."/>
            <person name="Goodwin L."/>
            <person name="Han C."/>
            <person name="Tapia R."/>
            <person name="Saunders E."/>
            <person name="Schmutz J."/>
            <person name="Brettin T."/>
            <person name="Larimer F."/>
            <person name="Land M."/>
            <person name="Hauser L."/>
            <person name="Vargas C."/>
            <person name="Nieto J.J."/>
            <person name="Kyrpides N.C."/>
            <person name="Ivanova N."/>
            <person name="Goker M."/>
            <person name="Klenk H.P."/>
            <person name="Csonka L.N."/>
            <person name="Woyke T."/>
        </authorList>
    </citation>
    <scope>NUCLEOTIDE SEQUENCE [LARGE SCALE GENOMIC DNA]</scope>
    <source>
        <strain>ATCC BAA-138 / DSM 3043 / CIP 106854 / NCIMB 13768 / 1H11</strain>
    </source>
</reference>
<sequence length="316" mass="34925">MTQLEALKQLSMVVADTGDLEAIKRYQPHDATTNPSLILKAFELPGYQALIDETLAQVKADIADPQARVDEAVDRLSVAMGSEITQLIPGRVSTEVAAKLSFDREASIAKAHRLIELYEQRGIGRERVLIKLASTWEGIRAAEQLEKEGIQCNLTLLFSEAQARACFDAGVYLISPFVGRVTDWYKQKTGQEYTPEEDPGVVFVRKVCDIASRYRYDTVVMGASFRTKGQILGLAGCNRLTISPALLEELESEEGDIERKISDVGDASERLAPIDEAAFRWGLNQDAMATEKLAEGIRRFADDQATLEEKLAARLG</sequence>
<accession>Q1QZV1</accession>
<name>TAL_CHRSD</name>
<gene>
    <name evidence="2" type="primary">tal</name>
    <name type="ordered locus">Csal_0645</name>
</gene>